<sequence>MFRDTEFPLSSGTFTMPQSESTPHNDDFDDVFGSEPGSPTLDGRDMRDGDMFGVGNTEISDIPRLKEKHETEGYRDGVTKGKSESVQKGFDEGYGLGAVLGLRIGKIIGILEGISGAVSVSASKSEGEEWTKEKSRVEELSNNAKNELKTEKVFAREWWGEDGIWKFEVPGEKEGKDVVFPDVAAAHPLLKKWEGIVEEEIQKWSLDMDLMEGNEEDVVLVGQHVKADAVEQRIGAAKTDLNW</sequence>
<evidence type="ECO:0000250" key="1">
    <source>
        <dbReference type="UniProtKB" id="P47118"/>
    </source>
</evidence>
<evidence type="ECO:0000250" key="2">
    <source>
        <dbReference type="UniProtKB" id="Q9NRH1"/>
    </source>
</evidence>
<evidence type="ECO:0000256" key="3">
    <source>
        <dbReference type="SAM" id="MobiDB-lite"/>
    </source>
</evidence>
<evidence type="ECO:0000305" key="4"/>
<keyword id="KW-0963">Cytoplasm</keyword>
<keyword id="KW-0539">Nucleus</keyword>
<keyword id="KW-1185">Reference proteome</keyword>
<name>YAE1_BOTFB</name>
<protein>
    <recommendedName>
        <fullName>Protein yae1</fullName>
    </recommendedName>
</protein>
<reference key="1">
    <citation type="journal article" date="2011" name="PLoS Genet.">
        <title>Genomic analysis of the necrotrophic fungal pathogens Sclerotinia sclerotiorum and Botrytis cinerea.</title>
        <authorList>
            <person name="Amselem J."/>
            <person name="Cuomo C.A."/>
            <person name="van Kan J.A.L."/>
            <person name="Viaud M."/>
            <person name="Benito E.P."/>
            <person name="Couloux A."/>
            <person name="Coutinho P.M."/>
            <person name="de Vries R.P."/>
            <person name="Dyer P.S."/>
            <person name="Fillinger S."/>
            <person name="Fournier E."/>
            <person name="Gout L."/>
            <person name="Hahn M."/>
            <person name="Kohn L."/>
            <person name="Lapalu N."/>
            <person name="Plummer K.M."/>
            <person name="Pradier J.-M."/>
            <person name="Quevillon E."/>
            <person name="Sharon A."/>
            <person name="Simon A."/>
            <person name="ten Have A."/>
            <person name="Tudzynski B."/>
            <person name="Tudzynski P."/>
            <person name="Wincker P."/>
            <person name="Andrew M."/>
            <person name="Anthouard V."/>
            <person name="Beever R.E."/>
            <person name="Beffa R."/>
            <person name="Benoit I."/>
            <person name="Bouzid O."/>
            <person name="Brault B."/>
            <person name="Chen Z."/>
            <person name="Choquer M."/>
            <person name="Collemare J."/>
            <person name="Cotton P."/>
            <person name="Danchin E.G."/>
            <person name="Da Silva C."/>
            <person name="Gautier A."/>
            <person name="Giraud C."/>
            <person name="Giraud T."/>
            <person name="Gonzalez C."/>
            <person name="Grossetete S."/>
            <person name="Gueldener U."/>
            <person name="Henrissat B."/>
            <person name="Howlett B.J."/>
            <person name="Kodira C."/>
            <person name="Kretschmer M."/>
            <person name="Lappartient A."/>
            <person name="Leroch M."/>
            <person name="Levis C."/>
            <person name="Mauceli E."/>
            <person name="Neuveglise C."/>
            <person name="Oeser B."/>
            <person name="Pearson M."/>
            <person name="Poulain J."/>
            <person name="Poussereau N."/>
            <person name="Quesneville H."/>
            <person name="Rascle C."/>
            <person name="Schumacher J."/>
            <person name="Segurens B."/>
            <person name="Sexton A."/>
            <person name="Silva E."/>
            <person name="Sirven C."/>
            <person name="Soanes D.M."/>
            <person name="Talbot N.J."/>
            <person name="Templeton M."/>
            <person name="Yandava C."/>
            <person name="Yarden O."/>
            <person name="Zeng Q."/>
            <person name="Rollins J.A."/>
            <person name="Lebrun M.-H."/>
            <person name="Dickman M."/>
        </authorList>
    </citation>
    <scope>NUCLEOTIDE SEQUENCE [LARGE SCALE GENOMIC DNA]</scope>
    <source>
        <strain>B05.10</strain>
    </source>
</reference>
<reference key="2">
    <citation type="journal article" date="2012" name="Eukaryot. Cell">
        <title>Genome update of Botrytis cinerea strains B05.10 and T4.</title>
        <authorList>
            <person name="Staats M."/>
            <person name="van Kan J.A.L."/>
        </authorList>
    </citation>
    <scope>NUCLEOTIDE SEQUENCE [LARGE SCALE GENOMIC DNA]</scope>
    <scope>GENOME REANNOTATION</scope>
    <source>
        <strain>B05.10</strain>
    </source>
</reference>
<reference key="3">
    <citation type="journal article" date="2017" name="Mol. Plant Pathol.">
        <title>A gapless genome sequence of the fungus Botrytis cinerea.</title>
        <authorList>
            <person name="van Kan J.A.L."/>
            <person name="Stassen J.H.M."/>
            <person name="Mosbach A."/>
            <person name="van der Lee T.A.J."/>
            <person name="Faino L."/>
            <person name="Farmer A.D."/>
            <person name="Papasotiriou D.G."/>
            <person name="Zhou S."/>
            <person name="Seidl M.F."/>
            <person name="Cottam E."/>
            <person name="Edel D."/>
            <person name="Hahn M."/>
            <person name="Schwartz D.C."/>
            <person name="Dietrich R.A."/>
            <person name="Widdison S."/>
            <person name="Scalliet G."/>
        </authorList>
    </citation>
    <scope>NUCLEOTIDE SEQUENCE [LARGE SCALE GENOMIC DNA]</scope>
    <scope>GENOME REANNOTATION</scope>
    <source>
        <strain>B05.10</strain>
    </source>
</reference>
<dbReference type="EMBL" id="CP009810">
    <property type="protein sequence ID" value="ATZ50701.1"/>
    <property type="molecule type" value="Genomic_DNA"/>
</dbReference>
<dbReference type="RefSeq" id="XP_001560375.1">
    <property type="nucleotide sequence ID" value="XM_001560325.1"/>
</dbReference>
<dbReference type="EnsemblFungi" id="Bcin06g01940.1">
    <property type="protein sequence ID" value="Bcin06p01940.1"/>
    <property type="gene ID" value="Bcin06g01940"/>
</dbReference>
<dbReference type="GeneID" id="5441015"/>
<dbReference type="KEGG" id="bfu:BCIN_06g01940"/>
<dbReference type="VEuPathDB" id="FungiDB:Bcin06g01940"/>
<dbReference type="OrthoDB" id="20086at2759"/>
<dbReference type="Proteomes" id="UP000001798">
    <property type="component" value="Chromosome bcin06"/>
</dbReference>
<dbReference type="GO" id="GO:0005737">
    <property type="term" value="C:cytoplasm"/>
    <property type="evidence" value="ECO:0007669"/>
    <property type="project" value="UniProtKB-SubCell"/>
</dbReference>
<dbReference type="GO" id="GO:0005634">
    <property type="term" value="C:nucleus"/>
    <property type="evidence" value="ECO:0007669"/>
    <property type="project" value="UniProtKB-SubCell"/>
</dbReference>
<dbReference type="GO" id="GO:0051604">
    <property type="term" value="P:protein maturation"/>
    <property type="evidence" value="ECO:0000250"/>
    <property type="project" value="UniProtKB"/>
</dbReference>
<dbReference type="InterPro" id="IPR019191">
    <property type="entry name" value="Essential_protein_Yae1_N"/>
</dbReference>
<dbReference type="InterPro" id="IPR038881">
    <property type="entry name" value="Yae1-like"/>
</dbReference>
<dbReference type="PANTHER" id="PTHR18829">
    <property type="entry name" value="PROTEIN YAE1 HOMOLOG"/>
    <property type="match status" value="1"/>
</dbReference>
<dbReference type="PANTHER" id="PTHR18829:SF0">
    <property type="entry name" value="PROTEIN YAE1 HOMOLOG"/>
    <property type="match status" value="1"/>
</dbReference>
<dbReference type="Pfam" id="PF09811">
    <property type="entry name" value="Yae1_N"/>
    <property type="match status" value="1"/>
</dbReference>
<comment type="function">
    <text evidence="2">The complex LTO1:YAE1 may function as a target specific adapter that probably recruits apo-RPLI1 to the cytosolic iron-sulfur protein assembly (CIA) complex machinery. May be required for biogenesis of the large ribosomal subunit and initiation of translation.</text>
</comment>
<comment type="subunit">
    <text evidence="2">May form a complex with LTO1.</text>
</comment>
<comment type="subcellular location">
    <subcellularLocation>
        <location evidence="1">Cytoplasm</location>
    </subcellularLocation>
    <subcellularLocation>
        <location evidence="1">Nucleus</location>
    </subcellularLocation>
</comment>
<comment type="similarity">
    <text evidence="4">Belongs to the YAE1 family.</text>
</comment>
<gene>
    <name type="primary">yae1</name>
    <name type="ORF">BC1G_01207</name>
    <name type="ORF">BCIN_06g01940</name>
</gene>
<accession>A6RL85</accession>
<accession>A0A384JJR9</accession>
<proteinExistence type="inferred from homology"/>
<feature type="chain" id="PRO_0000324422" description="Protein yae1">
    <location>
        <begin position="1"/>
        <end position="243"/>
    </location>
</feature>
<feature type="region of interest" description="Disordered" evidence="3">
    <location>
        <begin position="1"/>
        <end position="49"/>
    </location>
</feature>
<feature type="region of interest" description="deca-GX3 motif; required for interaction with LTO1" evidence="1">
    <location>
        <begin position="73"/>
        <end position="113"/>
    </location>
</feature>
<feature type="compositionally biased region" description="Polar residues" evidence="3">
    <location>
        <begin position="8"/>
        <end position="22"/>
    </location>
</feature>
<organism>
    <name type="scientific">Botryotinia fuckeliana (strain B05.10)</name>
    <name type="common">Noble rot fungus</name>
    <name type="synonym">Botrytis cinerea</name>
    <dbReference type="NCBI Taxonomy" id="332648"/>
    <lineage>
        <taxon>Eukaryota</taxon>
        <taxon>Fungi</taxon>
        <taxon>Dikarya</taxon>
        <taxon>Ascomycota</taxon>
        <taxon>Pezizomycotina</taxon>
        <taxon>Leotiomycetes</taxon>
        <taxon>Helotiales</taxon>
        <taxon>Sclerotiniaceae</taxon>
        <taxon>Botrytis</taxon>
    </lineage>
</organism>